<evidence type="ECO:0000255" key="1">
    <source>
        <dbReference type="HAMAP-Rule" id="MF_00191"/>
    </source>
</evidence>
<reference key="1">
    <citation type="journal article" date="2004" name="Proc. Natl. Acad. Sci. U.S.A.">
        <title>The louse-borne human pathogen Bartonella quintana is a genomic derivative of the zoonotic agent Bartonella henselae.</title>
        <authorList>
            <person name="Alsmark U.C.M."/>
            <person name="Frank A.C."/>
            <person name="Karlberg E.O."/>
            <person name="Legault B.-A."/>
            <person name="Ardell D.H."/>
            <person name="Canbaeck B."/>
            <person name="Eriksson A.-S."/>
            <person name="Naeslund A.K."/>
            <person name="Handley S.A."/>
            <person name="Huvet M."/>
            <person name="La Scola B."/>
            <person name="Holmberg M."/>
            <person name="Andersson S.G.E."/>
        </authorList>
    </citation>
    <scope>NUCLEOTIDE SEQUENCE [LARGE SCALE GENOMIC DNA]</scope>
    <source>
        <strain>Toulouse</strain>
    </source>
</reference>
<comment type="function">
    <text evidence="1">Catalyzes the conversion of 1-hydroxy-2-methyl-2-(E)-butenyl 4-diphosphate (HMBPP) into a mixture of isopentenyl diphosphate (IPP) and dimethylallyl diphosphate (DMAPP). Acts in the terminal step of the DOXP/MEP pathway for isoprenoid precursor biosynthesis.</text>
</comment>
<comment type="catalytic activity">
    <reaction evidence="1">
        <text>isopentenyl diphosphate + 2 oxidized [2Fe-2S]-[ferredoxin] + H2O = (2E)-4-hydroxy-3-methylbut-2-enyl diphosphate + 2 reduced [2Fe-2S]-[ferredoxin] + 2 H(+)</text>
        <dbReference type="Rhea" id="RHEA:24488"/>
        <dbReference type="Rhea" id="RHEA-COMP:10000"/>
        <dbReference type="Rhea" id="RHEA-COMP:10001"/>
        <dbReference type="ChEBI" id="CHEBI:15377"/>
        <dbReference type="ChEBI" id="CHEBI:15378"/>
        <dbReference type="ChEBI" id="CHEBI:33737"/>
        <dbReference type="ChEBI" id="CHEBI:33738"/>
        <dbReference type="ChEBI" id="CHEBI:128753"/>
        <dbReference type="ChEBI" id="CHEBI:128769"/>
        <dbReference type="EC" id="1.17.7.4"/>
    </reaction>
</comment>
<comment type="catalytic activity">
    <reaction evidence="1">
        <text>dimethylallyl diphosphate + 2 oxidized [2Fe-2S]-[ferredoxin] + H2O = (2E)-4-hydroxy-3-methylbut-2-enyl diphosphate + 2 reduced [2Fe-2S]-[ferredoxin] + 2 H(+)</text>
        <dbReference type="Rhea" id="RHEA:24825"/>
        <dbReference type="Rhea" id="RHEA-COMP:10000"/>
        <dbReference type="Rhea" id="RHEA-COMP:10001"/>
        <dbReference type="ChEBI" id="CHEBI:15377"/>
        <dbReference type="ChEBI" id="CHEBI:15378"/>
        <dbReference type="ChEBI" id="CHEBI:33737"/>
        <dbReference type="ChEBI" id="CHEBI:33738"/>
        <dbReference type="ChEBI" id="CHEBI:57623"/>
        <dbReference type="ChEBI" id="CHEBI:128753"/>
        <dbReference type="EC" id="1.17.7.4"/>
    </reaction>
</comment>
<comment type="cofactor">
    <cofactor evidence="1">
        <name>[4Fe-4S] cluster</name>
        <dbReference type="ChEBI" id="CHEBI:49883"/>
    </cofactor>
    <text evidence="1">Binds 1 [4Fe-4S] cluster per subunit.</text>
</comment>
<comment type="pathway">
    <text evidence="1">Isoprenoid biosynthesis; dimethylallyl diphosphate biosynthesis; dimethylallyl diphosphate from (2E)-4-hydroxy-3-methylbutenyl diphosphate: step 1/1.</text>
</comment>
<comment type="pathway">
    <text evidence="1">Isoprenoid biosynthesis; isopentenyl diphosphate biosynthesis via DXP pathway; isopentenyl diphosphate from 1-deoxy-D-xylulose 5-phosphate: step 6/6.</text>
</comment>
<comment type="similarity">
    <text evidence="1">Belongs to the IspH family.</text>
</comment>
<gene>
    <name evidence="1" type="primary">ispH</name>
    <name type="synonym">lytB</name>
    <name type="ordered locus">BQ03600</name>
</gene>
<protein>
    <recommendedName>
        <fullName evidence="1">4-hydroxy-3-methylbut-2-enyl diphosphate reductase</fullName>
        <shortName evidence="1">HMBPP reductase</shortName>
        <ecNumber evidence="1">1.17.7.4</ecNumber>
    </recommendedName>
</protein>
<keyword id="KW-0004">4Fe-4S</keyword>
<keyword id="KW-0408">Iron</keyword>
<keyword id="KW-0411">Iron-sulfur</keyword>
<keyword id="KW-0414">Isoprene biosynthesis</keyword>
<keyword id="KW-0479">Metal-binding</keyword>
<keyword id="KW-0560">Oxidoreductase</keyword>
<feature type="chain" id="PRO_0000128779" description="4-hydroxy-3-methylbut-2-enyl diphosphate reductase">
    <location>
        <begin position="1"/>
        <end position="340"/>
    </location>
</feature>
<feature type="active site" description="Proton donor" evidence="1">
    <location>
        <position position="135"/>
    </location>
</feature>
<feature type="binding site" evidence="1">
    <location>
        <position position="18"/>
    </location>
    <ligand>
        <name>[4Fe-4S] cluster</name>
        <dbReference type="ChEBI" id="CHEBI:49883"/>
    </ligand>
</feature>
<feature type="binding site" evidence="1">
    <location>
        <position position="47"/>
    </location>
    <ligand>
        <name>(2E)-4-hydroxy-3-methylbut-2-enyl diphosphate</name>
        <dbReference type="ChEBI" id="CHEBI:128753"/>
    </ligand>
</feature>
<feature type="binding site" evidence="1">
    <location>
        <position position="47"/>
    </location>
    <ligand>
        <name>dimethylallyl diphosphate</name>
        <dbReference type="ChEBI" id="CHEBI:57623"/>
    </ligand>
</feature>
<feature type="binding site" evidence="1">
    <location>
        <position position="47"/>
    </location>
    <ligand>
        <name>isopentenyl diphosphate</name>
        <dbReference type="ChEBI" id="CHEBI:128769"/>
    </ligand>
</feature>
<feature type="binding site" evidence="1">
    <location>
        <position position="83"/>
    </location>
    <ligand>
        <name>(2E)-4-hydroxy-3-methylbut-2-enyl diphosphate</name>
        <dbReference type="ChEBI" id="CHEBI:128753"/>
    </ligand>
</feature>
<feature type="binding site" evidence="1">
    <location>
        <position position="83"/>
    </location>
    <ligand>
        <name>dimethylallyl diphosphate</name>
        <dbReference type="ChEBI" id="CHEBI:57623"/>
    </ligand>
</feature>
<feature type="binding site" evidence="1">
    <location>
        <position position="83"/>
    </location>
    <ligand>
        <name>isopentenyl diphosphate</name>
        <dbReference type="ChEBI" id="CHEBI:128769"/>
    </ligand>
</feature>
<feature type="binding site" evidence="1">
    <location>
        <position position="105"/>
    </location>
    <ligand>
        <name>[4Fe-4S] cluster</name>
        <dbReference type="ChEBI" id="CHEBI:49883"/>
    </ligand>
</feature>
<feature type="binding site" evidence="1">
    <location>
        <position position="133"/>
    </location>
    <ligand>
        <name>(2E)-4-hydroxy-3-methylbut-2-enyl diphosphate</name>
        <dbReference type="ChEBI" id="CHEBI:128753"/>
    </ligand>
</feature>
<feature type="binding site" evidence="1">
    <location>
        <position position="133"/>
    </location>
    <ligand>
        <name>dimethylallyl diphosphate</name>
        <dbReference type="ChEBI" id="CHEBI:57623"/>
    </ligand>
</feature>
<feature type="binding site" evidence="1">
    <location>
        <position position="133"/>
    </location>
    <ligand>
        <name>isopentenyl diphosphate</name>
        <dbReference type="ChEBI" id="CHEBI:128769"/>
    </ligand>
</feature>
<feature type="binding site" evidence="1">
    <location>
        <position position="174"/>
    </location>
    <ligand>
        <name>(2E)-4-hydroxy-3-methylbut-2-enyl diphosphate</name>
        <dbReference type="ChEBI" id="CHEBI:128753"/>
    </ligand>
</feature>
<feature type="binding site" evidence="1">
    <location>
        <position position="204"/>
    </location>
    <ligand>
        <name>[4Fe-4S] cluster</name>
        <dbReference type="ChEBI" id="CHEBI:49883"/>
    </ligand>
</feature>
<feature type="binding site" evidence="1">
    <location>
        <position position="232"/>
    </location>
    <ligand>
        <name>(2E)-4-hydroxy-3-methylbut-2-enyl diphosphate</name>
        <dbReference type="ChEBI" id="CHEBI:128753"/>
    </ligand>
</feature>
<feature type="binding site" evidence="1">
    <location>
        <position position="232"/>
    </location>
    <ligand>
        <name>dimethylallyl diphosphate</name>
        <dbReference type="ChEBI" id="CHEBI:57623"/>
    </ligand>
</feature>
<feature type="binding site" evidence="1">
    <location>
        <position position="232"/>
    </location>
    <ligand>
        <name>isopentenyl diphosphate</name>
        <dbReference type="ChEBI" id="CHEBI:128769"/>
    </ligand>
</feature>
<feature type="binding site" evidence="1">
    <location>
        <position position="233"/>
    </location>
    <ligand>
        <name>(2E)-4-hydroxy-3-methylbut-2-enyl diphosphate</name>
        <dbReference type="ChEBI" id="CHEBI:128753"/>
    </ligand>
</feature>
<feature type="binding site" evidence="1">
    <location>
        <position position="233"/>
    </location>
    <ligand>
        <name>dimethylallyl diphosphate</name>
        <dbReference type="ChEBI" id="CHEBI:57623"/>
    </ligand>
</feature>
<feature type="binding site" evidence="1">
    <location>
        <position position="233"/>
    </location>
    <ligand>
        <name>isopentenyl diphosphate</name>
        <dbReference type="ChEBI" id="CHEBI:128769"/>
    </ligand>
</feature>
<feature type="binding site" evidence="1">
    <location>
        <position position="234"/>
    </location>
    <ligand>
        <name>(2E)-4-hydroxy-3-methylbut-2-enyl diphosphate</name>
        <dbReference type="ChEBI" id="CHEBI:128753"/>
    </ligand>
</feature>
<feature type="binding site" evidence="1">
    <location>
        <position position="234"/>
    </location>
    <ligand>
        <name>dimethylallyl diphosphate</name>
        <dbReference type="ChEBI" id="CHEBI:57623"/>
    </ligand>
</feature>
<feature type="binding site" evidence="1">
    <location>
        <position position="234"/>
    </location>
    <ligand>
        <name>isopentenyl diphosphate</name>
        <dbReference type="ChEBI" id="CHEBI:128769"/>
    </ligand>
</feature>
<feature type="binding site" evidence="1">
    <location>
        <position position="277"/>
    </location>
    <ligand>
        <name>(2E)-4-hydroxy-3-methylbut-2-enyl diphosphate</name>
        <dbReference type="ChEBI" id="CHEBI:128753"/>
    </ligand>
</feature>
<feature type="binding site" evidence="1">
    <location>
        <position position="277"/>
    </location>
    <ligand>
        <name>dimethylallyl diphosphate</name>
        <dbReference type="ChEBI" id="CHEBI:57623"/>
    </ligand>
</feature>
<feature type="binding site" evidence="1">
    <location>
        <position position="277"/>
    </location>
    <ligand>
        <name>isopentenyl diphosphate</name>
        <dbReference type="ChEBI" id="CHEBI:128769"/>
    </ligand>
</feature>
<dbReference type="EC" id="1.17.7.4" evidence="1"/>
<dbReference type="EMBL" id="BX897700">
    <property type="protein sequence ID" value="CAF25860.1"/>
    <property type="molecule type" value="Genomic_DNA"/>
</dbReference>
<dbReference type="RefSeq" id="WP_011179153.1">
    <property type="nucleotide sequence ID" value="NC_005955.1"/>
</dbReference>
<dbReference type="SMR" id="Q6G0C9"/>
<dbReference type="KEGG" id="bqu:BQ03600"/>
<dbReference type="eggNOG" id="COG0761">
    <property type="taxonomic scope" value="Bacteria"/>
</dbReference>
<dbReference type="HOGENOM" id="CLU_027486_1_0_5"/>
<dbReference type="OrthoDB" id="9804068at2"/>
<dbReference type="UniPathway" id="UPA00056">
    <property type="reaction ID" value="UER00097"/>
</dbReference>
<dbReference type="UniPathway" id="UPA00059">
    <property type="reaction ID" value="UER00105"/>
</dbReference>
<dbReference type="Proteomes" id="UP000000597">
    <property type="component" value="Chromosome"/>
</dbReference>
<dbReference type="GO" id="GO:0051539">
    <property type="term" value="F:4 iron, 4 sulfur cluster binding"/>
    <property type="evidence" value="ECO:0007669"/>
    <property type="project" value="UniProtKB-UniRule"/>
</dbReference>
<dbReference type="GO" id="GO:0051745">
    <property type="term" value="F:4-hydroxy-3-methylbut-2-enyl diphosphate reductase activity"/>
    <property type="evidence" value="ECO:0007669"/>
    <property type="project" value="UniProtKB-UniRule"/>
</dbReference>
<dbReference type="GO" id="GO:0046872">
    <property type="term" value="F:metal ion binding"/>
    <property type="evidence" value="ECO:0007669"/>
    <property type="project" value="UniProtKB-KW"/>
</dbReference>
<dbReference type="GO" id="GO:0050992">
    <property type="term" value="P:dimethylallyl diphosphate biosynthetic process"/>
    <property type="evidence" value="ECO:0007669"/>
    <property type="project" value="UniProtKB-UniRule"/>
</dbReference>
<dbReference type="GO" id="GO:0019288">
    <property type="term" value="P:isopentenyl diphosphate biosynthetic process, methylerythritol 4-phosphate pathway"/>
    <property type="evidence" value="ECO:0007669"/>
    <property type="project" value="UniProtKB-UniRule"/>
</dbReference>
<dbReference type="GO" id="GO:0016114">
    <property type="term" value="P:terpenoid biosynthetic process"/>
    <property type="evidence" value="ECO:0007669"/>
    <property type="project" value="UniProtKB-UniRule"/>
</dbReference>
<dbReference type="CDD" id="cd13944">
    <property type="entry name" value="lytB_ispH"/>
    <property type="match status" value="1"/>
</dbReference>
<dbReference type="Gene3D" id="3.40.50.11270">
    <property type="match status" value="1"/>
</dbReference>
<dbReference type="Gene3D" id="3.40.1010.20">
    <property type="entry name" value="4-hydroxy-3-methylbut-2-enyl diphosphate reductase, catalytic domain"/>
    <property type="match status" value="2"/>
</dbReference>
<dbReference type="HAMAP" id="MF_00191">
    <property type="entry name" value="IspH"/>
    <property type="match status" value="1"/>
</dbReference>
<dbReference type="InterPro" id="IPR003451">
    <property type="entry name" value="LytB/IspH"/>
</dbReference>
<dbReference type="NCBIfam" id="TIGR00216">
    <property type="entry name" value="ispH_lytB"/>
    <property type="match status" value="1"/>
</dbReference>
<dbReference type="NCBIfam" id="NF002190">
    <property type="entry name" value="PRK01045.1-4"/>
    <property type="match status" value="1"/>
</dbReference>
<dbReference type="PANTHER" id="PTHR30426">
    <property type="entry name" value="4-HYDROXY-3-METHYLBUT-2-ENYL DIPHOSPHATE REDUCTASE"/>
    <property type="match status" value="1"/>
</dbReference>
<dbReference type="PANTHER" id="PTHR30426:SF0">
    <property type="entry name" value="4-HYDROXY-3-METHYLBUT-2-ENYL DIPHOSPHATE REDUCTASE"/>
    <property type="match status" value="1"/>
</dbReference>
<dbReference type="Pfam" id="PF02401">
    <property type="entry name" value="LYTB"/>
    <property type="match status" value="1"/>
</dbReference>
<organism>
    <name type="scientific">Bartonella quintana (strain Toulouse)</name>
    <name type="common">Rochalimaea quintana</name>
    <dbReference type="NCBI Taxonomy" id="283165"/>
    <lineage>
        <taxon>Bacteria</taxon>
        <taxon>Pseudomonadati</taxon>
        <taxon>Pseudomonadota</taxon>
        <taxon>Alphaproteobacteria</taxon>
        <taxon>Hyphomicrobiales</taxon>
        <taxon>Bartonellaceae</taxon>
        <taxon>Bartonella</taxon>
    </lineage>
</organism>
<proteinExistence type="inferred from homology"/>
<accession>Q6G0C9</accession>
<sequence>MSVLSPLIIRLCSPRGFCAGVDRAIQIVLLALKKYGAPVYVRHEIVHNRYVVEGLQQRGAIFVEELDEIPEEHRNQPVVFSAHGVPKSVPEQADRYNLFYLDATCPLVSKVHKQAMRHQRHGRHVILIGHAGHPEVIGTMGQLEKGAVTLIETIEDALHYQPDDPDKLGFVTQTTLSVEDTAGILDVLQRRFPALEPPAAESICYATTNRQNAVKAAALGSDLFLIVGAPNSSNSRRLVEVAERFGARQSILVQRADEIDFDRLGPLSVVSLSAGASAPEIIVDEIISAFRERYDVTIELSETVVEMETFLVNRELRNVILTPQDMAFVNGQSETLKNKN</sequence>
<name>ISPH_BARQU</name>